<proteinExistence type="inferred from homology"/>
<gene>
    <name evidence="1" type="primary">nusB</name>
    <name type="ordered locus">Tfu_1094</name>
</gene>
<organism>
    <name type="scientific">Thermobifida fusca (strain YX)</name>
    <dbReference type="NCBI Taxonomy" id="269800"/>
    <lineage>
        <taxon>Bacteria</taxon>
        <taxon>Bacillati</taxon>
        <taxon>Actinomycetota</taxon>
        <taxon>Actinomycetes</taxon>
        <taxon>Streptosporangiales</taxon>
        <taxon>Nocardiopsidaceae</taxon>
        <taxon>Thermobifida</taxon>
    </lineage>
</organism>
<feature type="chain" id="PRO_0000265616" description="Transcription antitermination protein NusB">
    <location>
        <begin position="1"/>
        <end position="142"/>
    </location>
</feature>
<protein>
    <recommendedName>
        <fullName evidence="1">Transcription antitermination protein NusB</fullName>
    </recommendedName>
    <alternativeName>
        <fullName evidence="1">Antitermination factor NusB</fullName>
    </alternativeName>
</protein>
<keyword id="KW-0694">RNA-binding</keyword>
<keyword id="KW-0804">Transcription</keyword>
<keyword id="KW-0889">Transcription antitermination</keyword>
<keyword id="KW-0805">Transcription regulation</keyword>
<reference key="1">
    <citation type="journal article" date="2007" name="J. Bacteriol.">
        <title>Genome sequence and analysis of the soil cellulolytic actinomycete Thermobifida fusca YX.</title>
        <authorList>
            <person name="Lykidis A."/>
            <person name="Mavromatis K."/>
            <person name="Ivanova N."/>
            <person name="Anderson I."/>
            <person name="Land M."/>
            <person name="DiBartolo G."/>
            <person name="Martinez M."/>
            <person name="Lapidus A."/>
            <person name="Lucas S."/>
            <person name="Copeland A."/>
            <person name="Richardson P."/>
            <person name="Wilson D.B."/>
            <person name="Kyrpides N."/>
        </authorList>
    </citation>
    <scope>NUCLEOTIDE SEQUENCE [LARGE SCALE GENOMIC DNA]</scope>
    <source>
        <strain>YX</strain>
    </source>
</reference>
<dbReference type="EMBL" id="CP000088">
    <property type="protein sequence ID" value="AAZ55132.1"/>
    <property type="molecule type" value="Genomic_DNA"/>
</dbReference>
<dbReference type="RefSeq" id="WP_011291541.1">
    <property type="nucleotide sequence ID" value="NC_007333.1"/>
</dbReference>
<dbReference type="SMR" id="Q47QY5"/>
<dbReference type="STRING" id="269800.Tfu_1094"/>
<dbReference type="KEGG" id="tfu:Tfu_1094"/>
<dbReference type="eggNOG" id="COG0781">
    <property type="taxonomic scope" value="Bacteria"/>
</dbReference>
<dbReference type="HOGENOM" id="CLU_087843_2_3_11"/>
<dbReference type="OrthoDB" id="3528057at2"/>
<dbReference type="GO" id="GO:0005829">
    <property type="term" value="C:cytosol"/>
    <property type="evidence" value="ECO:0007669"/>
    <property type="project" value="TreeGrafter"/>
</dbReference>
<dbReference type="GO" id="GO:0003723">
    <property type="term" value="F:RNA binding"/>
    <property type="evidence" value="ECO:0007669"/>
    <property type="project" value="UniProtKB-UniRule"/>
</dbReference>
<dbReference type="GO" id="GO:0006353">
    <property type="term" value="P:DNA-templated transcription termination"/>
    <property type="evidence" value="ECO:0007669"/>
    <property type="project" value="UniProtKB-UniRule"/>
</dbReference>
<dbReference type="GO" id="GO:0031564">
    <property type="term" value="P:transcription antitermination"/>
    <property type="evidence" value="ECO:0007669"/>
    <property type="project" value="UniProtKB-KW"/>
</dbReference>
<dbReference type="Gene3D" id="1.10.940.10">
    <property type="entry name" value="NusB-like"/>
    <property type="match status" value="1"/>
</dbReference>
<dbReference type="HAMAP" id="MF_00073">
    <property type="entry name" value="NusB"/>
    <property type="match status" value="1"/>
</dbReference>
<dbReference type="InterPro" id="IPR035926">
    <property type="entry name" value="NusB-like_sf"/>
</dbReference>
<dbReference type="InterPro" id="IPR011605">
    <property type="entry name" value="NusB_fam"/>
</dbReference>
<dbReference type="InterPro" id="IPR006027">
    <property type="entry name" value="NusB_RsmB_TIM44"/>
</dbReference>
<dbReference type="NCBIfam" id="TIGR01951">
    <property type="entry name" value="nusB"/>
    <property type="match status" value="1"/>
</dbReference>
<dbReference type="PANTHER" id="PTHR11078:SF3">
    <property type="entry name" value="ANTITERMINATION NUSB DOMAIN-CONTAINING PROTEIN"/>
    <property type="match status" value="1"/>
</dbReference>
<dbReference type="PANTHER" id="PTHR11078">
    <property type="entry name" value="N UTILIZATION SUBSTANCE PROTEIN B-RELATED"/>
    <property type="match status" value="1"/>
</dbReference>
<dbReference type="Pfam" id="PF01029">
    <property type="entry name" value="NusB"/>
    <property type="match status" value="1"/>
</dbReference>
<dbReference type="SUPFAM" id="SSF48013">
    <property type="entry name" value="NusB-like"/>
    <property type="match status" value="1"/>
</dbReference>
<evidence type="ECO:0000255" key="1">
    <source>
        <dbReference type="HAMAP-Rule" id="MF_00073"/>
    </source>
</evidence>
<comment type="function">
    <text evidence="1">Involved in transcription antitermination. Required for transcription of ribosomal RNA (rRNA) genes. Binds specifically to the boxA antiterminator sequence of the ribosomal RNA (rrn) operons.</text>
</comment>
<comment type="similarity">
    <text evidence="1">Belongs to the NusB family.</text>
</comment>
<sequence length="142" mass="16080">MGGSRRRGSRHKARVRAVEILYEAEVRGVPVSEVIERRRAQTEPPINEFTEQLATRVDEHRARIDELLETYAIGWTLDRMPVVDRNILRIGVYELLWADDIPDGVAIAEAVAMAKELSTDESPVFVNGLLSRLMEKKPSLSL</sequence>
<name>NUSB_THEFY</name>
<accession>Q47QY5</accession>